<keyword id="KW-0131">Cell cycle</keyword>
<keyword id="KW-0132">Cell division</keyword>
<keyword id="KW-0133">Cell shape</keyword>
<keyword id="KW-0961">Cell wall biogenesis/degradation</keyword>
<keyword id="KW-0963">Cytoplasm</keyword>
<keyword id="KW-0274">FAD</keyword>
<keyword id="KW-0285">Flavoprotein</keyword>
<keyword id="KW-0521">NADP</keyword>
<keyword id="KW-0560">Oxidoreductase</keyword>
<keyword id="KW-0573">Peptidoglycan synthesis</keyword>
<keyword id="KW-1185">Reference proteome</keyword>
<proteinExistence type="inferred from homology"/>
<protein>
    <recommendedName>
        <fullName evidence="1">UDP-N-acetylenolpyruvoylglucosamine reductase</fullName>
        <ecNumber evidence="1">1.3.1.98</ecNumber>
    </recommendedName>
    <alternativeName>
        <fullName evidence="1">UDP-N-acetylmuramate dehydrogenase</fullName>
    </alternativeName>
</protein>
<organism>
    <name type="scientific">Pectobacterium atrosepticum (strain SCRI 1043 / ATCC BAA-672)</name>
    <name type="common">Erwinia carotovora subsp. atroseptica</name>
    <dbReference type="NCBI Taxonomy" id="218491"/>
    <lineage>
        <taxon>Bacteria</taxon>
        <taxon>Pseudomonadati</taxon>
        <taxon>Pseudomonadota</taxon>
        <taxon>Gammaproteobacteria</taxon>
        <taxon>Enterobacterales</taxon>
        <taxon>Pectobacteriaceae</taxon>
        <taxon>Pectobacterium</taxon>
    </lineage>
</organism>
<evidence type="ECO:0000255" key="1">
    <source>
        <dbReference type="HAMAP-Rule" id="MF_00037"/>
    </source>
</evidence>
<reference key="1">
    <citation type="journal article" date="2004" name="Proc. Natl. Acad. Sci. U.S.A.">
        <title>Genome sequence of the enterobacterial phytopathogen Erwinia carotovora subsp. atroseptica and characterization of virulence factors.</title>
        <authorList>
            <person name="Bell K.S."/>
            <person name="Sebaihia M."/>
            <person name="Pritchard L."/>
            <person name="Holden M.T.G."/>
            <person name="Hyman L.J."/>
            <person name="Holeva M.C."/>
            <person name="Thomson N.R."/>
            <person name="Bentley S.D."/>
            <person name="Churcher L.J.C."/>
            <person name="Mungall K."/>
            <person name="Atkin R."/>
            <person name="Bason N."/>
            <person name="Brooks K."/>
            <person name="Chillingworth T."/>
            <person name="Clark K."/>
            <person name="Doggett J."/>
            <person name="Fraser A."/>
            <person name="Hance Z."/>
            <person name="Hauser H."/>
            <person name="Jagels K."/>
            <person name="Moule S."/>
            <person name="Norbertczak H."/>
            <person name="Ormond D."/>
            <person name="Price C."/>
            <person name="Quail M.A."/>
            <person name="Sanders M."/>
            <person name="Walker D."/>
            <person name="Whitehead S."/>
            <person name="Salmond G.P.C."/>
            <person name="Birch P.R.J."/>
            <person name="Parkhill J."/>
            <person name="Toth I.K."/>
        </authorList>
    </citation>
    <scope>NUCLEOTIDE SEQUENCE [LARGE SCALE GENOMIC DNA]</scope>
    <source>
        <strain>SCRI 1043 / ATCC BAA-672</strain>
    </source>
</reference>
<gene>
    <name evidence="1" type="primary">murB</name>
    <name type="ordered locus">ECA0213</name>
</gene>
<feature type="chain" id="PRO_0000224683" description="UDP-N-acetylenolpyruvoylglucosamine reductase">
    <location>
        <begin position="1"/>
        <end position="345"/>
    </location>
</feature>
<feature type="domain" description="FAD-binding PCMH-type" evidence="1">
    <location>
        <begin position="16"/>
        <end position="186"/>
    </location>
</feature>
<feature type="active site" evidence="1">
    <location>
        <position position="162"/>
    </location>
</feature>
<feature type="active site" description="Proton donor" evidence="1">
    <location>
        <position position="232"/>
    </location>
</feature>
<feature type="active site" evidence="1">
    <location>
        <position position="328"/>
    </location>
</feature>
<accession>Q6DAP0</accession>
<name>MURB_PECAS</name>
<dbReference type="EC" id="1.3.1.98" evidence="1"/>
<dbReference type="EMBL" id="BX950851">
    <property type="protein sequence ID" value="CAG73132.1"/>
    <property type="molecule type" value="Genomic_DNA"/>
</dbReference>
<dbReference type="RefSeq" id="WP_011091851.1">
    <property type="nucleotide sequence ID" value="NC_004547.2"/>
</dbReference>
<dbReference type="SMR" id="Q6DAP0"/>
<dbReference type="STRING" id="218491.ECA0213"/>
<dbReference type="GeneID" id="57207075"/>
<dbReference type="KEGG" id="eca:ECA0213"/>
<dbReference type="PATRIC" id="fig|218491.5.peg.212"/>
<dbReference type="eggNOG" id="COG0812">
    <property type="taxonomic scope" value="Bacteria"/>
</dbReference>
<dbReference type="HOGENOM" id="CLU_035304_0_0_6"/>
<dbReference type="OrthoDB" id="9804753at2"/>
<dbReference type="UniPathway" id="UPA00219"/>
<dbReference type="Proteomes" id="UP000007966">
    <property type="component" value="Chromosome"/>
</dbReference>
<dbReference type="GO" id="GO:0005829">
    <property type="term" value="C:cytosol"/>
    <property type="evidence" value="ECO:0007669"/>
    <property type="project" value="TreeGrafter"/>
</dbReference>
<dbReference type="GO" id="GO:0071949">
    <property type="term" value="F:FAD binding"/>
    <property type="evidence" value="ECO:0007669"/>
    <property type="project" value="InterPro"/>
</dbReference>
<dbReference type="GO" id="GO:0008762">
    <property type="term" value="F:UDP-N-acetylmuramate dehydrogenase activity"/>
    <property type="evidence" value="ECO:0007669"/>
    <property type="project" value="UniProtKB-UniRule"/>
</dbReference>
<dbReference type="GO" id="GO:0051301">
    <property type="term" value="P:cell division"/>
    <property type="evidence" value="ECO:0007669"/>
    <property type="project" value="UniProtKB-KW"/>
</dbReference>
<dbReference type="GO" id="GO:0071555">
    <property type="term" value="P:cell wall organization"/>
    <property type="evidence" value="ECO:0007669"/>
    <property type="project" value="UniProtKB-KW"/>
</dbReference>
<dbReference type="GO" id="GO:0009252">
    <property type="term" value="P:peptidoglycan biosynthetic process"/>
    <property type="evidence" value="ECO:0007669"/>
    <property type="project" value="UniProtKB-UniRule"/>
</dbReference>
<dbReference type="GO" id="GO:0008360">
    <property type="term" value="P:regulation of cell shape"/>
    <property type="evidence" value="ECO:0007669"/>
    <property type="project" value="UniProtKB-KW"/>
</dbReference>
<dbReference type="Gene3D" id="3.30.465.10">
    <property type="match status" value="1"/>
</dbReference>
<dbReference type="Gene3D" id="3.90.78.10">
    <property type="entry name" value="UDP-N-acetylenolpyruvoylglucosamine reductase, C-terminal domain"/>
    <property type="match status" value="1"/>
</dbReference>
<dbReference type="Gene3D" id="3.30.43.10">
    <property type="entry name" value="Uridine Diphospho-n-acetylenolpyruvylglucosamine Reductase, domain 2"/>
    <property type="match status" value="1"/>
</dbReference>
<dbReference type="HAMAP" id="MF_00037">
    <property type="entry name" value="MurB"/>
    <property type="match status" value="1"/>
</dbReference>
<dbReference type="InterPro" id="IPR016166">
    <property type="entry name" value="FAD-bd_PCMH"/>
</dbReference>
<dbReference type="InterPro" id="IPR036318">
    <property type="entry name" value="FAD-bd_PCMH-like_sf"/>
</dbReference>
<dbReference type="InterPro" id="IPR016167">
    <property type="entry name" value="FAD-bd_PCMH_sub1"/>
</dbReference>
<dbReference type="InterPro" id="IPR016169">
    <property type="entry name" value="FAD-bd_PCMH_sub2"/>
</dbReference>
<dbReference type="InterPro" id="IPR003170">
    <property type="entry name" value="MurB"/>
</dbReference>
<dbReference type="InterPro" id="IPR011601">
    <property type="entry name" value="MurB_C"/>
</dbReference>
<dbReference type="InterPro" id="IPR036635">
    <property type="entry name" value="MurB_C_sf"/>
</dbReference>
<dbReference type="InterPro" id="IPR006094">
    <property type="entry name" value="Oxid_FAD_bind_N"/>
</dbReference>
<dbReference type="NCBIfam" id="TIGR00179">
    <property type="entry name" value="murB"/>
    <property type="match status" value="1"/>
</dbReference>
<dbReference type="NCBIfam" id="NF000755">
    <property type="entry name" value="PRK00046.1"/>
    <property type="match status" value="1"/>
</dbReference>
<dbReference type="PANTHER" id="PTHR21071">
    <property type="entry name" value="UDP-N-ACETYLENOLPYRUVOYLGLUCOSAMINE REDUCTASE"/>
    <property type="match status" value="1"/>
</dbReference>
<dbReference type="PANTHER" id="PTHR21071:SF4">
    <property type="entry name" value="UDP-N-ACETYLENOLPYRUVOYLGLUCOSAMINE REDUCTASE"/>
    <property type="match status" value="1"/>
</dbReference>
<dbReference type="Pfam" id="PF01565">
    <property type="entry name" value="FAD_binding_4"/>
    <property type="match status" value="1"/>
</dbReference>
<dbReference type="Pfam" id="PF02873">
    <property type="entry name" value="MurB_C"/>
    <property type="match status" value="1"/>
</dbReference>
<dbReference type="SUPFAM" id="SSF56176">
    <property type="entry name" value="FAD-binding/transporter-associated domain-like"/>
    <property type="match status" value="1"/>
</dbReference>
<dbReference type="SUPFAM" id="SSF56194">
    <property type="entry name" value="Uridine diphospho-N-Acetylenolpyruvylglucosamine reductase, MurB, C-terminal domain"/>
    <property type="match status" value="1"/>
</dbReference>
<dbReference type="PROSITE" id="PS51387">
    <property type="entry name" value="FAD_PCMH"/>
    <property type="match status" value="1"/>
</dbReference>
<sequence length="345" mass="38097">MAPSVISLRSHNSFSLSVSASCIKVADTQDKLIEEWRVASASQEPVLLLGEGSNVLFLEDFLGTILLNRLKGIDIREESDGWYLHVGAGENWHQLVEYTLKCGITGLENLALIPGCVGSAPIQNIGAYGIELQHVCDYVELLDLTEGKTIHLTTEECQFGYRESIFKHQYRYGFAITAVGIFLKKEWNPVLNYGDLAKLNPATVTPQQVFDSVCHMRRSKLPDPVVTGNAGSFFKNPIVTKQHADSILREYPNMPQYLQADGNVKLAAGWLIDQCKLKGFQLGGAAVHEQQALVLINKSNAKGSDIVELARYVRNQVAAKFSIQLEPEVRFIAAHGEVNAIEVLS</sequence>
<comment type="function">
    <text evidence="1">Cell wall formation.</text>
</comment>
<comment type="catalytic activity">
    <reaction evidence="1">
        <text>UDP-N-acetyl-alpha-D-muramate + NADP(+) = UDP-N-acetyl-3-O-(1-carboxyvinyl)-alpha-D-glucosamine + NADPH + H(+)</text>
        <dbReference type="Rhea" id="RHEA:12248"/>
        <dbReference type="ChEBI" id="CHEBI:15378"/>
        <dbReference type="ChEBI" id="CHEBI:57783"/>
        <dbReference type="ChEBI" id="CHEBI:58349"/>
        <dbReference type="ChEBI" id="CHEBI:68483"/>
        <dbReference type="ChEBI" id="CHEBI:70757"/>
        <dbReference type="EC" id="1.3.1.98"/>
    </reaction>
</comment>
<comment type="cofactor">
    <cofactor evidence="1">
        <name>FAD</name>
        <dbReference type="ChEBI" id="CHEBI:57692"/>
    </cofactor>
</comment>
<comment type="pathway">
    <text evidence="1">Cell wall biogenesis; peptidoglycan biosynthesis.</text>
</comment>
<comment type="subcellular location">
    <subcellularLocation>
        <location evidence="1">Cytoplasm</location>
    </subcellularLocation>
</comment>
<comment type="similarity">
    <text evidence="1">Belongs to the MurB family.</text>
</comment>